<accession>Q0T3G3</accession>
<feature type="chain" id="PRO_1000064280" description="Protein/nucleic acid deglycase HchA">
    <location>
        <begin position="1"/>
        <end position="283"/>
    </location>
</feature>
<feature type="active site" description="Nucleophile" evidence="1">
    <location>
        <position position="185"/>
    </location>
</feature>
<feature type="binding site" evidence="1">
    <location>
        <position position="86"/>
    </location>
    <ligand>
        <name>Zn(2+)</name>
        <dbReference type="ChEBI" id="CHEBI:29105"/>
    </ligand>
</feature>
<feature type="binding site" evidence="1">
    <location>
        <position position="91"/>
    </location>
    <ligand>
        <name>Zn(2+)</name>
        <dbReference type="ChEBI" id="CHEBI:29105"/>
    </ligand>
</feature>
<feature type="binding site" evidence="1">
    <location>
        <position position="123"/>
    </location>
    <ligand>
        <name>Zn(2+)</name>
        <dbReference type="ChEBI" id="CHEBI:29105"/>
    </ligand>
</feature>
<gene>
    <name evidence="1" type="primary">hchA</name>
    <name type="ordered locus">SFV_2012</name>
</gene>
<comment type="function">
    <text evidence="1">Protein and nucleotide deglycase that catalyzes the deglycation of the Maillard adducts formed between amino groups of proteins or nucleotides and reactive carbonyl groups of glyoxals. Thus, functions as a protein deglycase that repairs methylglyoxal- and glyoxal-glycated proteins, and releases repaired proteins and lactate or glycolate, respectively. Deglycates cysteine, arginine and lysine residues in proteins, and thus reactivates these proteins by reversing glycation by glyoxals. Acts on early glycation intermediates (hemithioacetals and aminocarbinols), preventing the formation of Schiff bases and advanced glycation endproducts (AGE). Also functions as a nucleotide deglycase able to repair glycated guanine in the free nucleotide pool (GTP, GDP, GMP, dGTP) and in DNA and RNA. Is thus involved in a major nucleotide repair system named guanine glycation repair (GG repair), dedicated to reversing methylglyoxal and glyoxal damage via nucleotide sanitization and direct nucleic acid repair. Plays an important role in protecting cells from carbonyl stress.</text>
</comment>
<comment type="catalytic activity">
    <reaction evidence="1">
        <text>N(omega)-(1-hydroxy-2-oxopropyl)-L-arginyl-[protein] + H2O = lactate + L-arginyl-[protein] + H(+)</text>
        <dbReference type="Rhea" id="RHEA:49548"/>
        <dbReference type="Rhea" id="RHEA-COMP:10532"/>
        <dbReference type="Rhea" id="RHEA-COMP:12428"/>
        <dbReference type="ChEBI" id="CHEBI:15377"/>
        <dbReference type="ChEBI" id="CHEBI:15378"/>
        <dbReference type="ChEBI" id="CHEBI:24996"/>
        <dbReference type="ChEBI" id="CHEBI:29965"/>
        <dbReference type="ChEBI" id="CHEBI:131708"/>
        <dbReference type="EC" id="3.5.1.124"/>
    </reaction>
</comment>
<comment type="catalytic activity">
    <reaction evidence="1">
        <text>N(6)-(1-hydroxy-2-oxopropyl)-L-lysyl-[protein] + H2O = lactate + L-lysyl-[protein] + H(+)</text>
        <dbReference type="Rhea" id="RHEA:49552"/>
        <dbReference type="Rhea" id="RHEA-COMP:9752"/>
        <dbReference type="Rhea" id="RHEA-COMP:12429"/>
        <dbReference type="ChEBI" id="CHEBI:15377"/>
        <dbReference type="ChEBI" id="CHEBI:15378"/>
        <dbReference type="ChEBI" id="CHEBI:24996"/>
        <dbReference type="ChEBI" id="CHEBI:29969"/>
        <dbReference type="ChEBI" id="CHEBI:131709"/>
        <dbReference type="EC" id="3.5.1.124"/>
    </reaction>
</comment>
<comment type="catalytic activity">
    <reaction evidence="1">
        <text>S-(1-hydroxy-2-oxopropyl)-L-cysteinyl-[protein] + H2O = lactate + L-cysteinyl-[protein] + H(+)</text>
        <dbReference type="Rhea" id="RHEA:49556"/>
        <dbReference type="Rhea" id="RHEA-COMP:10131"/>
        <dbReference type="Rhea" id="RHEA-COMP:12430"/>
        <dbReference type="ChEBI" id="CHEBI:15377"/>
        <dbReference type="ChEBI" id="CHEBI:15378"/>
        <dbReference type="ChEBI" id="CHEBI:24996"/>
        <dbReference type="ChEBI" id="CHEBI:29950"/>
        <dbReference type="ChEBI" id="CHEBI:131710"/>
        <dbReference type="EC" id="3.5.1.124"/>
    </reaction>
</comment>
<comment type="catalytic activity">
    <reaction evidence="1">
        <text>N(omega)-(1-hydroxy-2-oxoethyl)-L-arginyl-[protein] + H2O = L-arginyl-[protein] + glycolate + H(+)</text>
        <dbReference type="Rhea" id="RHEA:57188"/>
        <dbReference type="Rhea" id="RHEA-COMP:10532"/>
        <dbReference type="Rhea" id="RHEA-COMP:14844"/>
        <dbReference type="ChEBI" id="CHEBI:15377"/>
        <dbReference type="ChEBI" id="CHEBI:15378"/>
        <dbReference type="ChEBI" id="CHEBI:29805"/>
        <dbReference type="ChEBI" id="CHEBI:29965"/>
        <dbReference type="ChEBI" id="CHEBI:141553"/>
        <dbReference type="EC" id="3.5.1.124"/>
    </reaction>
</comment>
<comment type="catalytic activity">
    <reaction evidence="1">
        <text>N(6)-(1-hydroxy-2-oxoethyl)-L-lysyl-[protein] + H2O = glycolate + L-lysyl-[protein] + H(+)</text>
        <dbReference type="Rhea" id="RHEA:57192"/>
        <dbReference type="Rhea" id="RHEA-COMP:9752"/>
        <dbReference type="Rhea" id="RHEA-COMP:14845"/>
        <dbReference type="ChEBI" id="CHEBI:15377"/>
        <dbReference type="ChEBI" id="CHEBI:15378"/>
        <dbReference type="ChEBI" id="CHEBI:29805"/>
        <dbReference type="ChEBI" id="CHEBI:29969"/>
        <dbReference type="ChEBI" id="CHEBI:141554"/>
        <dbReference type="EC" id="3.5.1.124"/>
    </reaction>
</comment>
<comment type="catalytic activity">
    <reaction evidence="1">
        <text>S-(1-hydroxy-2-oxoethyl)-L-cysteinyl-[protein] + H2O = glycolate + L-cysteinyl-[protein] + H(+)</text>
        <dbReference type="Rhea" id="RHEA:57196"/>
        <dbReference type="Rhea" id="RHEA-COMP:10131"/>
        <dbReference type="Rhea" id="RHEA-COMP:14846"/>
        <dbReference type="ChEBI" id="CHEBI:15377"/>
        <dbReference type="ChEBI" id="CHEBI:15378"/>
        <dbReference type="ChEBI" id="CHEBI:29805"/>
        <dbReference type="ChEBI" id="CHEBI:29950"/>
        <dbReference type="ChEBI" id="CHEBI:141555"/>
        <dbReference type="EC" id="3.5.1.124"/>
    </reaction>
</comment>
<comment type="catalytic activity">
    <reaction evidence="1">
        <text>N(2)-(1-hydroxy-2-oxopropyl)-dGTP + H2O = lactate + dGTP + H(+)</text>
        <dbReference type="Rhea" id="RHEA:57244"/>
        <dbReference type="ChEBI" id="CHEBI:15377"/>
        <dbReference type="ChEBI" id="CHEBI:15378"/>
        <dbReference type="ChEBI" id="CHEBI:24996"/>
        <dbReference type="ChEBI" id="CHEBI:61429"/>
        <dbReference type="ChEBI" id="CHEBI:141569"/>
    </reaction>
</comment>
<comment type="catalytic activity">
    <reaction evidence="1">
        <text>N(2)-(1-hydroxy-2-oxopropyl)-GTP + H2O = lactate + GTP + H(+)</text>
        <dbReference type="Rhea" id="RHEA:57256"/>
        <dbReference type="ChEBI" id="CHEBI:15377"/>
        <dbReference type="ChEBI" id="CHEBI:15378"/>
        <dbReference type="ChEBI" id="CHEBI:24996"/>
        <dbReference type="ChEBI" id="CHEBI:37565"/>
        <dbReference type="ChEBI" id="CHEBI:141570"/>
    </reaction>
</comment>
<comment type="catalytic activity">
    <reaction evidence="1">
        <text>N(2)-(1-hydroxy-2-oxopropyl)-GDP + H2O = lactate + GDP + H(+)</text>
        <dbReference type="Rhea" id="RHEA:57260"/>
        <dbReference type="ChEBI" id="CHEBI:15377"/>
        <dbReference type="ChEBI" id="CHEBI:15378"/>
        <dbReference type="ChEBI" id="CHEBI:24996"/>
        <dbReference type="ChEBI" id="CHEBI:58189"/>
        <dbReference type="ChEBI" id="CHEBI:141573"/>
    </reaction>
</comment>
<comment type="catalytic activity">
    <reaction evidence="1">
        <text>N(2)-(1-hydroxy-2-oxopropyl)-GMP + H2O = lactate + GMP + H(+)</text>
        <dbReference type="Rhea" id="RHEA:57268"/>
        <dbReference type="ChEBI" id="CHEBI:15377"/>
        <dbReference type="ChEBI" id="CHEBI:15378"/>
        <dbReference type="ChEBI" id="CHEBI:24996"/>
        <dbReference type="ChEBI" id="CHEBI:58115"/>
        <dbReference type="ChEBI" id="CHEBI:141575"/>
    </reaction>
</comment>
<comment type="catalytic activity">
    <reaction evidence="1">
        <text>N(2)-(1-hydroxy-2-oxoethyl)-dGTP + H2O = dGTP + glycolate + H(+)</text>
        <dbReference type="Rhea" id="RHEA:57248"/>
        <dbReference type="ChEBI" id="CHEBI:15377"/>
        <dbReference type="ChEBI" id="CHEBI:15378"/>
        <dbReference type="ChEBI" id="CHEBI:29805"/>
        <dbReference type="ChEBI" id="CHEBI:61429"/>
        <dbReference type="ChEBI" id="CHEBI:141572"/>
    </reaction>
</comment>
<comment type="catalytic activity">
    <reaction evidence="1">
        <text>N(2)-(1-hydroxy-2-oxoethyl)-GTP + H2O = glycolate + GTP + H(+)</text>
        <dbReference type="Rhea" id="RHEA:57252"/>
        <dbReference type="ChEBI" id="CHEBI:15377"/>
        <dbReference type="ChEBI" id="CHEBI:15378"/>
        <dbReference type="ChEBI" id="CHEBI:29805"/>
        <dbReference type="ChEBI" id="CHEBI:37565"/>
        <dbReference type="ChEBI" id="CHEBI:141571"/>
    </reaction>
</comment>
<comment type="catalytic activity">
    <reaction evidence="1">
        <text>N(2)-(1-hydroxy-2-oxoethyl)-GDP + H2O = glycolate + GDP + H(+)</text>
        <dbReference type="Rhea" id="RHEA:57264"/>
        <dbReference type="ChEBI" id="CHEBI:15377"/>
        <dbReference type="ChEBI" id="CHEBI:15378"/>
        <dbReference type="ChEBI" id="CHEBI:29805"/>
        <dbReference type="ChEBI" id="CHEBI:58189"/>
        <dbReference type="ChEBI" id="CHEBI:141574"/>
    </reaction>
</comment>
<comment type="catalytic activity">
    <reaction evidence="1">
        <text>N(2)-(1-hydroxy-2-oxoethyl)-GMP + H2O = glycolate + GMP + H(+)</text>
        <dbReference type="Rhea" id="RHEA:57304"/>
        <dbReference type="ChEBI" id="CHEBI:15377"/>
        <dbReference type="ChEBI" id="CHEBI:15378"/>
        <dbReference type="ChEBI" id="CHEBI:29805"/>
        <dbReference type="ChEBI" id="CHEBI:58115"/>
        <dbReference type="ChEBI" id="CHEBI:141576"/>
    </reaction>
</comment>
<comment type="catalytic activity">
    <reaction evidence="1">
        <text>an N(2)-(1-hydroxy-2-oxopropyl)-guanosine in RNA + H2O = a guanosine in RNA + lactate + H(+)</text>
        <dbReference type="Rhea" id="RHEA:57288"/>
        <dbReference type="Rhea" id="RHEA-COMP:14855"/>
        <dbReference type="Rhea" id="RHEA-COMP:14858"/>
        <dbReference type="ChEBI" id="CHEBI:15377"/>
        <dbReference type="ChEBI" id="CHEBI:15378"/>
        <dbReference type="ChEBI" id="CHEBI:24996"/>
        <dbReference type="ChEBI" id="CHEBI:74269"/>
        <dbReference type="ChEBI" id="CHEBI:141580"/>
    </reaction>
</comment>
<comment type="catalytic activity">
    <reaction evidence="1">
        <text>an N(2)-(1-hydroxy-2-oxopropyl)-2'-deoxyguanosine in DNA + H2O = a 2'-deoxyguanosine in DNA + lactate + H(+)</text>
        <dbReference type="Rhea" id="RHEA:57300"/>
        <dbReference type="Rhea" id="RHEA-COMP:11367"/>
        <dbReference type="Rhea" id="RHEA-COMP:14856"/>
        <dbReference type="ChEBI" id="CHEBI:15377"/>
        <dbReference type="ChEBI" id="CHEBI:15378"/>
        <dbReference type="ChEBI" id="CHEBI:24996"/>
        <dbReference type="ChEBI" id="CHEBI:85445"/>
        <dbReference type="ChEBI" id="CHEBI:141578"/>
    </reaction>
</comment>
<comment type="catalytic activity">
    <reaction evidence="1">
        <text>an N(2)-(1-hydroxy-2-oxoethyl)-guanosine in RNA + H2O = a guanosine in RNA + glycolate + H(+)</text>
        <dbReference type="Rhea" id="RHEA:57292"/>
        <dbReference type="Rhea" id="RHEA-COMP:14855"/>
        <dbReference type="Rhea" id="RHEA-COMP:14859"/>
        <dbReference type="ChEBI" id="CHEBI:15377"/>
        <dbReference type="ChEBI" id="CHEBI:15378"/>
        <dbReference type="ChEBI" id="CHEBI:29805"/>
        <dbReference type="ChEBI" id="CHEBI:74269"/>
        <dbReference type="ChEBI" id="CHEBI:141581"/>
    </reaction>
</comment>
<comment type="catalytic activity">
    <reaction evidence="1">
        <text>an N(2)-(1-hydroxy-2-oxoethyl)-2'-deoxyguanosine in DNA + H2O = a 2'-deoxyguanosine in DNA + glycolate + H(+)</text>
        <dbReference type="Rhea" id="RHEA:57296"/>
        <dbReference type="Rhea" id="RHEA-COMP:11367"/>
        <dbReference type="Rhea" id="RHEA-COMP:14857"/>
        <dbReference type="ChEBI" id="CHEBI:15377"/>
        <dbReference type="ChEBI" id="CHEBI:15378"/>
        <dbReference type="ChEBI" id="CHEBI:29805"/>
        <dbReference type="ChEBI" id="CHEBI:85445"/>
        <dbReference type="ChEBI" id="CHEBI:141579"/>
    </reaction>
</comment>
<comment type="subunit">
    <text evidence="1">Homodimer.</text>
</comment>
<comment type="subcellular location">
    <subcellularLocation>
        <location evidence="1">Cytoplasm</location>
    </subcellularLocation>
</comment>
<comment type="induction">
    <text evidence="1">By heat shock.</text>
</comment>
<comment type="similarity">
    <text evidence="1">Belongs to the peptidase C56 family. HchA subfamily.</text>
</comment>
<proteinExistence type="inferred from homology"/>
<sequence length="283" mass="31280">MTVQTSKNPQVDIAEDNAFFPSEYSLSQYTSPVSDLDGVDYPKPYRGKHKILVIAADERYLPTDNGKLFSTGNHPIETLLPLYHLHAAGFEFEVATISGLMTKFEYWAMPHKDEKVMPFFEQHKSLFRNPKKLADVVASLNADSEYAAIFVPGGHGALIGLPESQDVAAALQWAIKNDRFVISLCHGPAAFLALRHSDNPLNGYSICAFPDAADKQTPDIGYMPGHLTWYFGEELKKMGMNIINDDITGRVHKDRKRLTGDSPFAANALGKLAAQEMLAAYAS</sequence>
<reference key="1">
    <citation type="journal article" date="2006" name="BMC Genomics">
        <title>Complete genome sequence of Shigella flexneri 5b and comparison with Shigella flexneri 2a.</title>
        <authorList>
            <person name="Nie H."/>
            <person name="Yang F."/>
            <person name="Zhang X."/>
            <person name="Yang J."/>
            <person name="Chen L."/>
            <person name="Wang J."/>
            <person name="Xiong Z."/>
            <person name="Peng J."/>
            <person name="Sun L."/>
            <person name="Dong J."/>
            <person name="Xue Y."/>
            <person name="Xu X."/>
            <person name="Chen S."/>
            <person name="Yao Z."/>
            <person name="Shen Y."/>
            <person name="Jin Q."/>
        </authorList>
    </citation>
    <scope>NUCLEOTIDE SEQUENCE [LARGE SCALE GENOMIC DNA]</scope>
    <source>
        <strain>8401</strain>
    </source>
</reference>
<evidence type="ECO:0000255" key="1">
    <source>
        <dbReference type="HAMAP-Rule" id="MF_01046"/>
    </source>
</evidence>
<keyword id="KW-0963">Cytoplasm</keyword>
<keyword id="KW-0227">DNA damage</keyword>
<keyword id="KW-0234">DNA repair</keyword>
<keyword id="KW-0378">Hydrolase</keyword>
<keyword id="KW-0479">Metal-binding</keyword>
<keyword id="KW-0346">Stress response</keyword>
<keyword id="KW-0862">Zinc</keyword>
<dbReference type="EC" id="3.1.2.-" evidence="1"/>
<dbReference type="EC" id="3.5.1.-" evidence="1"/>
<dbReference type="EC" id="3.5.1.124" evidence="1"/>
<dbReference type="EMBL" id="CP000266">
    <property type="protein sequence ID" value="ABF04152.1"/>
    <property type="molecule type" value="Genomic_DNA"/>
</dbReference>
<dbReference type="RefSeq" id="WP_000218218.1">
    <property type="nucleotide sequence ID" value="NC_008258.1"/>
</dbReference>
<dbReference type="SMR" id="Q0T3G3"/>
<dbReference type="KEGG" id="sfv:SFV_2012"/>
<dbReference type="HOGENOM" id="CLU_066933_0_0_6"/>
<dbReference type="Proteomes" id="UP000000659">
    <property type="component" value="Chromosome"/>
</dbReference>
<dbReference type="GO" id="GO:0005737">
    <property type="term" value="C:cytoplasm"/>
    <property type="evidence" value="ECO:0007669"/>
    <property type="project" value="UniProtKB-SubCell"/>
</dbReference>
<dbReference type="GO" id="GO:0019172">
    <property type="term" value="F:glyoxalase III activity"/>
    <property type="evidence" value="ECO:0007669"/>
    <property type="project" value="TreeGrafter"/>
</dbReference>
<dbReference type="GO" id="GO:0036524">
    <property type="term" value="F:protein deglycase activity"/>
    <property type="evidence" value="ECO:0007669"/>
    <property type="project" value="UniProtKB-UniRule"/>
</dbReference>
<dbReference type="GO" id="GO:0016790">
    <property type="term" value="F:thiolester hydrolase activity"/>
    <property type="evidence" value="ECO:0007669"/>
    <property type="project" value="UniProtKB-UniRule"/>
</dbReference>
<dbReference type="GO" id="GO:0008270">
    <property type="term" value="F:zinc ion binding"/>
    <property type="evidence" value="ECO:0007669"/>
    <property type="project" value="UniProtKB-UniRule"/>
</dbReference>
<dbReference type="GO" id="GO:0006281">
    <property type="term" value="P:DNA repair"/>
    <property type="evidence" value="ECO:0007669"/>
    <property type="project" value="UniProtKB-UniRule"/>
</dbReference>
<dbReference type="GO" id="GO:0019243">
    <property type="term" value="P:methylglyoxal catabolic process to D-lactate via S-lactoyl-glutathione"/>
    <property type="evidence" value="ECO:0007669"/>
    <property type="project" value="TreeGrafter"/>
</dbReference>
<dbReference type="GO" id="GO:0030091">
    <property type="term" value="P:protein repair"/>
    <property type="evidence" value="ECO:0007669"/>
    <property type="project" value="UniProtKB-UniRule"/>
</dbReference>
<dbReference type="FunFam" id="3.40.50.880:FF:000026">
    <property type="entry name" value="Protein/nucleic acid deglycase HchA"/>
    <property type="match status" value="1"/>
</dbReference>
<dbReference type="Gene3D" id="3.40.50.880">
    <property type="match status" value="1"/>
</dbReference>
<dbReference type="HAMAP" id="MF_01046">
    <property type="entry name" value="Deglycase_HchA"/>
    <property type="match status" value="1"/>
</dbReference>
<dbReference type="InterPro" id="IPR029062">
    <property type="entry name" value="Class_I_gatase-like"/>
</dbReference>
<dbReference type="InterPro" id="IPR017283">
    <property type="entry name" value="HchA"/>
</dbReference>
<dbReference type="InterPro" id="IPR050325">
    <property type="entry name" value="Prot/Nucl_acid_deglycase"/>
</dbReference>
<dbReference type="NCBIfam" id="NF003168">
    <property type="entry name" value="PRK04155.1"/>
    <property type="match status" value="1"/>
</dbReference>
<dbReference type="PANTHER" id="PTHR48094">
    <property type="entry name" value="PROTEIN/NUCLEIC ACID DEGLYCASE DJ-1-RELATED"/>
    <property type="match status" value="1"/>
</dbReference>
<dbReference type="PANTHER" id="PTHR48094:SF20">
    <property type="entry name" value="PROTEIN_NUCLEIC ACID DEGLYCASE 1"/>
    <property type="match status" value="1"/>
</dbReference>
<dbReference type="PIRSF" id="PIRSF037798">
    <property type="entry name" value="Chaperone_HchA"/>
    <property type="match status" value="1"/>
</dbReference>
<dbReference type="SUPFAM" id="SSF52317">
    <property type="entry name" value="Class I glutamine amidotransferase-like"/>
    <property type="match status" value="1"/>
</dbReference>
<protein>
    <recommendedName>
        <fullName evidence="1">Protein/nucleic acid deglycase HchA</fullName>
        <ecNumber evidence="1">3.1.2.-</ecNumber>
        <ecNumber evidence="1">3.5.1.-</ecNumber>
        <ecNumber evidence="1">3.5.1.124</ecNumber>
    </recommendedName>
    <alternativeName>
        <fullName evidence="1">Maillard deglycase</fullName>
    </alternativeName>
</protein>
<organism>
    <name type="scientific">Shigella flexneri serotype 5b (strain 8401)</name>
    <dbReference type="NCBI Taxonomy" id="373384"/>
    <lineage>
        <taxon>Bacteria</taxon>
        <taxon>Pseudomonadati</taxon>
        <taxon>Pseudomonadota</taxon>
        <taxon>Gammaproteobacteria</taxon>
        <taxon>Enterobacterales</taxon>
        <taxon>Enterobacteriaceae</taxon>
        <taxon>Shigella</taxon>
    </lineage>
</organism>
<name>HCHA_SHIF8</name>